<name>TRMB_CORGL</name>
<feature type="chain" id="PRO_0000171324" description="tRNA (guanine-N(7)-)-methyltransferase">
    <location>
        <begin position="1"/>
        <end position="255"/>
    </location>
</feature>
<feature type="region of interest" description="Disordered" evidence="3">
    <location>
        <begin position="1"/>
        <end position="25"/>
    </location>
</feature>
<feature type="region of interest" description="Interaction with RNA" evidence="2">
    <location>
        <begin position="164"/>
        <end position="169"/>
    </location>
</feature>
<feature type="compositionally biased region" description="Basic and acidic residues" evidence="3">
    <location>
        <begin position="1"/>
        <end position="11"/>
    </location>
</feature>
<feature type="active site" evidence="1">
    <location>
        <position position="158"/>
    </location>
</feature>
<feature type="binding site" evidence="2">
    <location>
        <position position="83"/>
    </location>
    <ligand>
        <name>S-adenosyl-L-methionine</name>
        <dbReference type="ChEBI" id="CHEBI:59789"/>
    </ligand>
</feature>
<feature type="binding site" evidence="2">
    <location>
        <position position="108"/>
    </location>
    <ligand>
        <name>S-adenosyl-L-methionine</name>
        <dbReference type="ChEBI" id="CHEBI:59789"/>
    </ligand>
</feature>
<feature type="binding site" evidence="2">
    <location>
        <position position="135"/>
    </location>
    <ligand>
        <name>S-adenosyl-L-methionine</name>
        <dbReference type="ChEBI" id="CHEBI:59789"/>
    </ligand>
</feature>
<feature type="binding site" evidence="2">
    <location>
        <position position="158"/>
    </location>
    <ligand>
        <name>S-adenosyl-L-methionine</name>
        <dbReference type="ChEBI" id="CHEBI:59789"/>
    </ligand>
</feature>
<feature type="binding site" evidence="2">
    <location>
        <position position="162"/>
    </location>
    <ligand>
        <name>substrate</name>
    </ligand>
</feature>
<feature type="binding site" evidence="2">
    <location>
        <position position="194"/>
    </location>
    <ligand>
        <name>substrate</name>
    </ligand>
</feature>
<feature type="binding site" evidence="2">
    <location>
        <begin position="232"/>
        <end position="235"/>
    </location>
    <ligand>
        <name>substrate</name>
    </ligand>
</feature>
<organism>
    <name type="scientific">Corynebacterium glutamicum (strain ATCC 13032 / DSM 20300 / JCM 1318 / BCRC 11384 / CCUG 27702 / LMG 3730 / NBRC 12168 / NCIMB 10025 / NRRL B-2784 / 534)</name>
    <dbReference type="NCBI Taxonomy" id="196627"/>
    <lineage>
        <taxon>Bacteria</taxon>
        <taxon>Bacillati</taxon>
        <taxon>Actinomycetota</taxon>
        <taxon>Actinomycetes</taxon>
        <taxon>Mycobacteriales</taxon>
        <taxon>Corynebacteriaceae</taxon>
        <taxon>Corynebacterium</taxon>
    </lineage>
</organism>
<accession>Q8NLS3</accession>
<proteinExistence type="inferred from homology"/>
<protein>
    <recommendedName>
        <fullName evidence="2">tRNA (guanine-N(7)-)-methyltransferase</fullName>
        <ecNumber evidence="2">2.1.1.33</ecNumber>
    </recommendedName>
    <alternativeName>
        <fullName evidence="2">tRNA (guanine(46)-N(7))-methyltransferase</fullName>
    </alternativeName>
    <alternativeName>
        <fullName evidence="2">tRNA(m7G46)-methyltransferase</fullName>
    </alternativeName>
</protein>
<comment type="function">
    <text evidence="2">Catalyzes the formation of N(7)-methylguanine at position 46 (m7G46) in tRNA.</text>
</comment>
<comment type="catalytic activity">
    <reaction evidence="2">
        <text>guanosine(46) in tRNA + S-adenosyl-L-methionine = N(7)-methylguanosine(46) in tRNA + S-adenosyl-L-homocysteine</text>
        <dbReference type="Rhea" id="RHEA:42708"/>
        <dbReference type="Rhea" id="RHEA-COMP:10188"/>
        <dbReference type="Rhea" id="RHEA-COMP:10189"/>
        <dbReference type="ChEBI" id="CHEBI:57856"/>
        <dbReference type="ChEBI" id="CHEBI:59789"/>
        <dbReference type="ChEBI" id="CHEBI:74269"/>
        <dbReference type="ChEBI" id="CHEBI:74480"/>
        <dbReference type="EC" id="2.1.1.33"/>
    </reaction>
</comment>
<comment type="pathway">
    <text evidence="2">tRNA modification; N(7)-methylguanine-tRNA biosynthesis.</text>
</comment>
<comment type="similarity">
    <text evidence="2">Belongs to the class I-like SAM-binding methyltransferase superfamily. TrmB family.</text>
</comment>
<reference key="1">
    <citation type="journal article" date="2003" name="Appl. Microbiol. Biotechnol.">
        <title>The Corynebacterium glutamicum genome: features and impacts on biotechnological processes.</title>
        <authorList>
            <person name="Ikeda M."/>
            <person name="Nakagawa S."/>
        </authorList>
    </citation>
    <scope>NUCLEOTIDE SEQUENCE [LARGE SCALE GENOMIC DNA]</scope>
    <source>
        <strain>ATCC 13032 / DSM 20300 / JCM 1318 / BCRC 11384 / CCUG 27702 / LMG 3730 / NBRC 12168 / NCIMB 10025 / NRRL B-2784 / 534</strain>
    </source>
</reference>
<reference key="2">
    <citation type="journal article" date="2003" name="J. Biotechnol.">
        <title>The complete Corynebacterium glutamicum ATCC 13032 genome sequence and its impact on the production of L-aspartate-derived amino acids and vitamins.</title>
        <authorList>
            <person name="Kalinowski J."/>
            <person name="Bathe B."/>
            <person name="Bartels D."/>
            <person name="Bischoff N."/>
            <person name="Bott M."/>
            <person name="Burkovski A."/>
            <person name="Dusch N."/>
            <person name="Eggeling L."/>
            <person name="Eikmanns B.J."/>
            <person name="Gaigalat L."/>
            <person name="Goesmann A."/>
            <person name="Hartmann M."/>
            <person name="Huthmacher K."/>
            <person name="Kraemer R."/>
            <person name="Linke B."/>
            <person name="McHardy A.C."/>
            <person name="Meyer F."/>
            <person name="Moeckel B."/>
            <person name="Pfefferle W."/>
            <person name="Puehler A."/>
            <person name="Rey D.A."/>
            <person name="Rueckert C."/>
            <person name="Rupp O."/>
            <person name="Sahm H."/>
            <person name="Wendisch V.F."/>
            <person name="Wiegraebe I."/>
            <person name="Tauch A."/>
        </authorList>
    </citation>
    <scope>NUCLEOTIDE SEQUENCE [LARGE SCALE GENOMIC DNA]</scope>
    <source>
        <strain>ATCC 13032 / DSM 20300 / JCM 1318 / BCRC 11384 / CCUG 27702 / LMG 3730 / NBRC 12168 / NCIMB 10025 / NRRL B-2784 / 534</strain>
    </source>
</reference>
<dbReference type="EC" id="2.1.1.33" evidence="2"/>
<dbReference type="EMBL" id="BA000036">
    <property type="protein sequence ID" value="BAC00259.1"/>
    <property type="molecule type" value="Genomic_DNA"/>
</dbReference>
<dbReference type="EMBL" id="BX927156">
    <property type="protein sequence ID" value="CAF20890.1"/>
    <property type="molecule type" value="Genomic_DNA"/>
</dbReference>
<dbReference type="RefSeq" id="NP_602057.1">
    <property type="nucleotide sequence ID" value="NC_003450.3"/>
</dbReference>
<dbReference type="RefSeq" id="WP_011015448.1">
    <property type="nucleotide sequence ID" value="NC_006958.1"/>
</dbReference>
<dbReference type="SMR" id="Q8NLS3"/>
<dbReference type="STRING" id="196627.cg3172"/>
<dbReference type="GeneID" id="1020808"/>
<dbReference type="KEGG" id="cgb:cg3172"/>
<dbReference type="KEGG" id="cgl:Cgl2865"/>
<dbReference type="PATRIC" id="fig|196627.13.peg.2797"/>
<dbReference type="eggNOG" id="COG0220">
    <property type="taxonomic scope" value="Bacteria"/>
</dbReference>
<dbReference type="HOGENOM" id="CLU_050910_0_2_11"/>
<dbReference type="OrthoDB" id="9802090at2"/>
<dbReference type="BioCyc" id="CORYNE:G18NG-12483-MONOMER"/>
<dbReference type="UniPathway" id="UPA00989"/>
<dbReference type="Proteomes" id="UP000000582">
    <property type="component" value="Chromosome"/>
</dbReference>
<dbReference type="Proteomes" id="UP000001009">
    <property type="component" value="Chromosome"/>
</dbReference>
<dbReference type="GO" id="GO:0043527">
    <property type="term" value="C:tRNA methyltransferase complex"/>
    <property type="evidence" value="ECO:0007669"/>
    <property type="project" value="TreeGrafter"/>
</dbReference>
<dbReference type="GO" id="GO:0008176">
    <property type="term" value="F:tRNA (guanine(46)-N7)-methyltransferase activity"/>
    <property type="evidence" value="ECO:0007669"/>
    <property type="project" value="UniProtKB-UniRule"/>
</dbReference>
<dbReference type="CDD" id="cd02440">
    <property type="entry name" value="AdoMet_MTases"/>
    <property type="match status" value="1"/>
</dbReference>
<dbReference type="Gene3D" id="3.40.50.150">
    <property type="entry name" value="Vaccinia Virus protein VP39"/>
    <property type="match status" value="1"/>
</dbReference>
<dbReference type="HAMAP" id="MF_01057">
    <property type="entry name" value="tRNA_methyltr_TrmB"/>
    <property type="match status" value="1"/>
</dbReference>
<dbReference type="InterPro" id="IPR029063">
    <property type="entry name" value="SAM-dependent_MTases_sf"/>
</dbReference>
<dbReference type="InterPro" id="IPR003358">
    <property type="entry name" value="tRNA_(Gua-N-7)_MeTrfase_Trmb"/>
</dbReference>
<dbReference type="InterPro" id="IPR055361">
    <property type="entry name" value="tRNA_methyltr_TrmB_bact"/>
</dbReference>
<dbReference type="NCBIfam" id="TIGR00091">
    <property type="entry name" value="tRNA (guanosine(46)-N7)-methyltransferase TrmB"/>
    <property type="match status" value="1"/>
</dbReference>
<dbReference type="PANTHER" id="PTHR23417">
    <property type="entry name" value="3-DEOXY-D-MANNO-OCTULOSONIC-ACID TRANSFERASE/TRNA GUANINE-N 7 - -METHYLTRANSFERASE"/>
    <property type="match status" value="1"/>
</dbReference>
<dbReference type="PANTHER" id="PTHR23417:SF14">
    <property type="entry name" value="PENTACOTRIPEPTIDE-REPEAT REGION OF PRORP DOMAIN-CONTAINING PROTEIN"/>
    <property type="match status" value="1"/>
</dbReference>
<dbReference type="Pfam" id="PF02390">
    <property type="entry name" value="Methyltransf_4"/>
    <property type="match status" value="1"/>
</dbReference>
<dbReference type="SUPFAM" id="SSF53335">
    <property type="entry name" value="S-adenosyl-L-methionine-dependent methyltransferases"/>
    <property type="match status" value="1"/>
</dbReference>
<dbReference type="PROSITE" id="PS51625">
    <property type="entry name" value="SAM_MT_TRMB"/>
    <property type="match status" value="1"/>
</dbReference>
<keyword id="KW-0489">Methyltransferase</keyword>
<keyword id="KW-1185">Reference proteome</keyword>
<keyword id="KW-0949">S-adenosyl-L-methionine</keyword>
<keyword id="KW-0808">Transferase</keyword>
<keyword id="KW-0819">tRNA processing</keyword>
<sequence length="255" mass="28806">MSISDNSRDQLGELPAGRPLQSDFDNDLDYPRLGSVTFRRGTLTENQQTMWDEKWPELGRVLEDELIDVDAWFGREGAKTIVEIGSGTGTSTAAMAPLEADTNIVAVELYKPGLAKLMGSVVRGEIDNVRMVRGDGIEVLNRMFADGSLDGIRVYFPDPWPKARHNKRRIIQSGPLNLFAKKLKPGGVLHVATDHADYAEWINELVEVEPLLEYKGWPWEECPQLTDRQVITKFEGKGLEKDHVINEYLWQKVQN</sequence>
<evidence type="ECO:0000250" key="1"/>
<evidence type="ECO:0000255" key="2">
    <source>
        <dbReference type="HAMAP-Rule" id="MF_01057"/>
    </source>
</evidence>
<evidence type="ECO:0000256" key="3">
    <source>
        <dbReference type="SAM" id="MobiDB-lite"/>
    </source>
</evidence>
<gene>
    <name evidence="2" type="primary">trmB</name>
    <name type="ordered locus">Cgl2865</name>
    <name type="ordered locus">cg3172</name>
</gene>